<proteinExistence type="inferred from homology"/>
<protein>
    <recommendedName>
        <fullName evidence="1">Xylose isomerase</fullName>
        <ecNumber evidence="1">5.3.1.5</ecNumber>
    </recommendedName>
</protein>
<keyword id="KW-0119">Carbohydrate metabolism</keyword>
<keyword id="KW-0963">Cytoplasm</keyword>
<keyword id="KW-0413">Isomerase</keyword>
<keyword id="KW-0460">Magnesium</keyword>
<keyword id="KW-0479">Metal-binding</keyword>
<keyword id="KW-0859">Xylose metabolism</keyword>
<name>XYLA_YERPS</name>
<evidence type="ECO:0000255" key="1">
    <source>
        <dbReference type="HAMAP-Rule" id="MF_00455"/>
    </source>
</evidence>
<organism>
    <name type="scientific">Yersinia pseudotuberculosis serotype I (strain IP32953)</name>
    <dbReference type="NCBI Taxonomy" id="273123"/>
    <lineage>
        <taxon>Bacteria</taxon>
        <taxon>Pseudomonadati</taxon>
        <taxon>Pseudomonadota</taxon>
        <taxon>Gammaproteobacteria</taxon>
        <taxon>Enterobacterales</taxon>
        <taxon>Yersiniaceae</taxon>
        <taxon>Yersinia</taxon>
    </lineage>
</organism>
<reference key="1">
    <citation type="journal article" date="2004" name="Proc. Natl. Acad. Sci. U.S.A.">
        <title>Insights into the evolution of Yersinia pestis through whole-genome comparison with Yersinia pseudotuberculosis.</title>
        <authorList>
            <person name="Chain P.S.G."/>
            <person name="Carniel E."/>
            <person name="Larimer F.W."/>
            <person name="Lamerdin J."/>
            <person name="Stoutland P.O."/>
            <person name="Regala W.M."/>
            <person name="Georgescu A.M."/>
            <person name="Vergez L.M."/>
            <person name="Land M.L."/>
            <person name="Motin V.L."/>
            <person name="Brubaker R.R."/>
            <person name="Fowler J."/>
            <person name="Hinnebusch J."/>
            <person name="Marceau M."/>
            <person name="Medigue C."/>
            <person name="Simonet M."/>
            <person name="Chenal-Francisque V."/>
            <person name="Souza B."/>
            <person name="Dacheux D."/>
            <person name="Elliott J.M."/>
            <person name="Derbise A."/>
            <person name="Hauser L.J."/>
            <person name="Garcia E."/>
        </authorList>
    </citation>
    <scope>NUCLEOTIDE SEQUENCE [LARGE SCALE GENOMIC DNA]</scope>
    <source>
        <strain>IP32953</strain>
    </source>
</reference>
<feature type="chain" id="PRO_0000236981" description="Xylose isomerase">
    <location>
        <begin position="1"/>
        <end position="439"/>
    </location>
</feature>
<feature type="active site" evidence="1">
    <location>
        <position position="101"/>
    </location>
</feature>
<feature type="active site" evidence="1">
    <location>
        <position position="104"/>
    </location>
</feature>
<feature type="binding site" evidence="1">
    <location>
        <position position="232"/>
    </location>
    <ligand>
        <name>Mg(2+)</name>
        <dbReference type="ChEBI" id="CHEBI:18420"/>
        <label>1</label>
    </ligand>
</feature>
<feature type="binding site" evidence="1">
    <location>
        <position position="268"/>
    </location>
    <ligand>
        <name>Mg(2+)</name>
        <dbReference type="ChEBI" id="CHEBI:18420"/>
        <label>1</label>
    </ligand>
</feature>
<feature type="binding site" evidence="1">
    <location>
        <position position="268"/>
    </location>
    <ligand>
        <name>Mg(2+)</name>
        <dbReference type="ChEBI" id="CHEBI:18420"/>
        <label>2</label>
    </ligand>
</feature>
<feature type="binding site" evidence="1">
    <location>
        <position position="271"/>
    </location>
    <ligand>
        <name>Mg(2+)</name>
        <dbReference type="ChEBI" id="CHEBI:18420"/>
        <label>2</label>
    </ligand>
</feature>
<feature type="binding site" evidence="1">
    <location>
        <position position="296"/>
    </location>
    <ligand>
        <name>Mg(2+)</name>
        <dbReference type="ChEBI" id="CHEBI:18420"/>
        <label>1</label>
    </ligand>
</feature>
<feature type="binding site" evidence="1">
    <location>
        <position position="307"/>
    </location>
    <ligand>
        <name>Mg(2+)</name>
        <dbReference type="ChEBI" id="CHEBI:18420"/>
        <label>2</label>
    </ligand>
</feature>
<feature type="binding site" evidence="1">
    <location>
        <position position="309"/>
    </location>
    <ligand>
        <name>Mg(2+)</name>
        <dbReference type="ChEBI" id="CHEBI:18420"/>
        <label>2</label>
    </ligand>
</feature>
<feature type="binding site" evidence="1">
    <location>
        <position position="339"/>
    </location>
    <ligand>
        <name>Mg(2+)</name>
        <dbReference type="ChEBI" id="CHEBI:18420"/>
        <label>1</label>
    </ligand>
</feature>
<accession>Q663Y3</accession>
<sequence>MQSYFNELEQVRYEGSQSTNPLAFHHYNPDEMILGKRMADHLRFAACYWHTFCWGGADMFGANAFDRPWQQPGDALALAKRKAEVAFEFFHKLNVPYYCFHDVDVSPEGASLQEYLNNFAVMTDVLAEKQAASGVKLLWGTANCFTHPRYGAGAATNPDPEVFSWAATQVFTAMNATRQLGGENYVLWGGREGYETLLNTDLRQEREQIGRFMQMVVEHKHKTGFQGTLLIEPKPQEPTKHQYDYDVATVYGFLKQFGLEKEIKVNIEANHATLAGHSFHHEIASAIALGIFGSVDANRGDPQLGWDTDQFPNSVEENTLVMFEILKAGGFTTGGLNFDAKVRRQSTDKYDLFYGHIGAMDTMALALKFAAKMIEDGQLDQIVAKRYAGWNSELGQQILQGKMSLEELSRYASQHNLNPQHQSGHQELLENKVNRYLFG</sequence>
<dbReference type="EC" id="5.3.1.5" evidence="1"/>
<dbReference type="EMBL" id="BX936398">
    <property type="protein sequence ID" value="CAH23129.1"/>
    <property type="molecule type" value="Genomic_DNA"/>
</dbReference>
<dbReference type="RefSeq" id="WP_002209593.1">
    <property type="nucleotide sequence ID" value="NZ_CP009712.1"/>
</dbReference>
<dbReference type="SMR" id="Q663Y3"/>
<dbReference type="GeneID" id="57974675"/>
<dbReference type="KEGG" id="ypo:BZ17_2690"/>
<dbReference type="KEGG" id="yps:YPTB3891"/>
<dbReference type="PATRIC" id="fig|273123.14.peg.2821"/>
<dbReference type="Proteomes" id="UP000001011">
    <property type="component" value="Chromosome"/>
</dbReference>
<dbReference type="GO" id="GO:0005737">
    <property type="term" value="C:cytoplasm"/>
    <property type="evidence" value="ECO:0007669"/>
    <property type="project" value="UniProtKB-SubCell"/>
</dbReference>
<dbReference type="GO" id="GO:0000287">
    <property type="term" value="F:magnesium ion binding"/>
    <property type="evidence" value="ECO:0007669"/>
    <property type="project" value="UniProtKB-UniRule"/>
</dbReference>
<dbReference type="GO" id="GO:0009045">
    <property type="term" value="F:xylose isomerase activity"/>
    <property type="evidence" value="ECO:0007669"/>
    <property type="project" value="UniProtKB-UniRule"/>
</dbReference>
<dbReference type="GO" id="GO:0042732">
    <property type="term" value="P:D-xylose metabolic process"/>
    <property type="evidence" value="ECO:0007669"/>
    <property type="project" value="UniProtKB-UniRule"/>
</dbReference>
<dbReference type="FunFam" id="3.20.20.150:FF:000002">
    <property type="entry name" value="Xylose isomerase"/>
    <property type="match status" value="1"/>
</dbReference>
<dbReference type="Gene3D" id="3.20.20.150">
    <property type="entry name" value="Divalent-metal-dependent TIM barrel enzymes"/>
    <property type="match status" value="1"/>
</dbReference>
<dbReference type="HAMAP" id="MF_00455">
    <property type="entry name" value="Xylose_isom_A"/>
    <property type="match status" value="1"/>
</dbReference>
<dbReference type="InterPro" id="IPR036237">
    <property type="entry name" value="Xyl_isomerase-like_sf"/>
</dbReference>
<dbReference type="InterPro" id="IPR013452">
    <property type="entry name" value="Xylose_isom_bac"/>
</dbReference>
<dbReference type="InterPro" id="IPR001998">
    <property type="entry name" value="Xylose_isomerase"/>
</dbReference>
<dbReference type="NCBIfam" id="NF003998">
    <property type="entry name" value="PRK05474.1"/>
    <property type="match status" value="1"/>
</dbReference>
<dbReference type="NCBIfam" id="TIGR02630">
    <property type="entry name" value="xylose_isom_A"/>
    <property type="match status" value="1"/>
</dbReference>
<dbReference type="PANTHER" id="PTHR48408">
    <property type="match status" value="1"/>
</dbReference>
<dbReference type="PANTHER" id="PTHR48408:SF1">
    <property type="entry name" value="XYLOSE ISOMERASE"/>
    <property type="match status" value="1"/>
</dbReference>
<dbReference type="PRINTS" id="PR00688">
    <property type="entry name" value="XYLOSISMRASE"/>
</dbReference>
<dbReference type="SUPFAM" id="SSF51658">
    <property type="entry name" value="Xylose isomerase-like"/>
    <property type="match status" value="1"/>
</dbReference>
<dbReference type="PROSITE" id="PS51415">
    <property type="entry name" value="XYLOSE_ISOMERASE"/>
    <property type="match status" value="1"/>
</dbReference>
<comment type="catalytic activity">
    <reaction evidence="1">
        <text>alpha-D-xylose = alpha-D-xylulofuranose</text>
        <dbReference type="Rhea" id="RHEA:22816"/>
        <dbReference type="ChEBI" id="CHEBI:28518"/>
        <dbReference type="ChEBI" id="CHEBI:188998"/>
        <dbReference type="EC" id="5.3.1.5"/>
    </reaction>
</comment>
<comment type="cofactor">
    <cofactor evidence="1">
        <name>Mg(2+)</name>
        <dbReference type="ChEBI" id="CHEBI:18420"/>
    </cofactor>
    <text evidence="1">Binds 2 magnesium ions per subunit.</text>
</comment>
<comment type="subunit">
    <text evidence="1">Homotetramer.</text>
</comment>
<comment type="subcellular location">
    <subcellularLocation>
        <location evidence="1">Cytoplasm</location>
    </subcellularLocation>
</comment>
<comment type="similarity">
    <text evidence="1">Belongs to the xylose isomerase family.</text>
</comment>
<gene>
    <name evidence="1" type="primary">xylA</name>
    <name type="ordered locus">YPTB3891</name>
</gene>